<proteinExistence type="inferred from homology"/>
<name>POB3_GIBZE</name>
<evidence type="ECO:0000250" key="1"/>
<evidence type="ECO:0000250" key="2">
    <source>
        <dbReference type="UniProtKB" id="Q04636"/>
    </source>
</evidence>
<evidence type="ECO:0000256" key="3">
    <source>
        <dbReference type="SAM" id="MobiDB-lite"/>
    </source>
</evidence>
<evidence type="ECO:0000305" key="4"/>
<organism>
    <name type="scientific">Gibberella zeae (strain ATCC MYA-4620 / CBS 123657 / FGSC 9075 / NRRL 31084 / PH-1)</name>
    <name type="common">Wheat head blight fungus</name>
    <name type="synonym">Fusarium graminearum</name>
    <dbReference type="NCBI Taxonomy" id="229533"/>
    <lineage>
        <taxon>Eukaryota</taxon>
        <taxon>Fungi</taxon>
        <taxon>Dikarya</taxon>
        <taxon>Ascomycota</taxon>
        <taxon>Pezizomycotina</taxon>
        <taxon>Sordariomycetes</taxon>
        <taxon>Hypocreomycetidae</taxon>
        <taxon>Hypocreales</taxon>
        <taxon>Nectriaceae</taxon>
        <taxon>Fusarium</taxon>
    </lineage>
</organism>
<gene>
    <name type="primary">POB3</name>
    <name type="ORF">FGRAMPH1_01T06043</name>
    <name type="ORF">FGRRES_02518_M</name>
    <name type="ORF">FGSG_02518</name>
</gene>
<sequence length="569" mass="63750">MTAIESFDNIYLDLSKESGKCRFAETGFGWKPVGGGDTFTLDHNNIASAQWSRAAKGYEIKIVQRSKSGIIQLDGFQQEDYDRLAKVFKNWYSTVLESKEHALRGWNWGKAEFSKSELTFSVQNRPAFELPYSEIGNTNLAGRNEVAVEMALPESGANAQLGGARSKGSKAAAGRDQLVEMRFYIPGVTTRKEAEGEDAGSDAGNDEQEKNAATLFYETLIDKAEIGETAGDTIATFLDVLHLTPRGRFDIDMYEASFRLRGKTYDYKIQYEAIKKFMVLPKPDEVHYMLVMGLDPPLRQGQTRYPFVVMQFKKDEEVTIDLNLNEEELKSKYQDKLEPHYEEPLHQVVAKIFRGLGNRKISSPAKDFITHRNQYGIKCSIKASEGFLYCLEKAFMFVPKPATYIAYEQTQSVTFSRVSGAVSALSTFDITVLLKNGAGSSQFSNISREDLKALESFFKLKGLRVKNEIDEDANLLAAAMNQQMDDSEDEVAAKADRGSADEDEESVDEDFRTDSESDVAEEYDSAHESDGSGSDESNVDDDEQDDDDDDDDDDGEDEDERPKKKKKTG</sequence>
<protein>
    <recommendedName>
        <fullName>FACT complex subunit POB3</fullName>
    </recommendedName>
    <alternativeName>
        <fullName>Facilitates chromatin transcription complex subunit POB3</fullName>
    </alternativeName>
</protein>
<accession>Q4IJU0</accession>
<accession>A0A098DA58</accession>
<accession>A0A0E0RUA1</accession>
<accession>A0A1C3YIY2</accession>
<accession>V6R218</accession>
<keyword id="KW-0158">Chromosome</keyword>
<keyword id="KW-0227">DNA damage</keyword>
<keyword id="KW-0234">DNA repair</keyword>
<keyword id="KW-0235">DNA replication</keyword>
<keyword id="KW-0539">Nucleus</keyword>
<keyword id="KW-1185">Reference proteome</keyword>
<keyword id="KW-0804">Transcription</keyword>
<keyword id="KW-0805">Transcription regulation</keyword>
<dbReference type="EMBL" id="DS231663">
    <property type="protein sequence ID" value="ESU07967.1"/>
    <property type="molecule type" value="Genomic_DNA"/>
</dbReference>
<dbReference type="EMBL" id="HG970332">
    <property type="protein sequence ID" value="SCB64439.1"/>
    <property type="molecule type" value="Genomic_DNA"/>
</dbReference>
<dbReference type="RefSeq" id="XP_011318452.1">
    <property type="nucleotide sequence ID" value="XM_011320150.1"/>
</dbReference>
<dbReference type="SMR" id="Q4IJU0"/>
<dbReference type="FunCoup" id="Q4IJU0">
    <property type="interactions" value="1026"/>
</dbReference>
<dbReference type="STRING" id="229533.Q4IJU0"/>
<dbReference type="GeneID" id="23549890"/>
<dbReference type="KEGG" id="fgr:FGSG_02518"/>
<dbReference type="VEuPathDB" id="FungiDB:FGRAMPH1_01G06043"/>
<dbReference type="eggNOG" id="KOG0526">
    <property type="taxonomic scope" value="Eukaryota"/>
</dbReference>
<dbReference type="HOGENOM" id="CLU_017374_3_0_1"/>
<dbReference type="InParanoid" id="Q4IJU0"/>
<dbReference type="OrthoDB" id="100741at110618"/>
<dbReference type="Proteomes" id="UP000070720">
    <property type="component" value="Chromosome 1"/>
</dbReference>
<dbReference type="GO" id="GO:0035101">
    <property type="term" value="C:FACT complex"/>
    <property type="evidence" value="ECO:0007669"/>
    <property type="project" value="TreeGrafter"/>
</dbReference>
<dbReference type="GO" id="GO:0003677">
    <property type="term" value="F:DNA binding"/>
    <property type="evidence" value="ECO:0007669"/>
    <property type="project" value="InterPro"/>
</dbReference>
<dbReference type="GO" id="GO:0042393">
    <property type="term" value="F:histone binding"/>
    <property type="evidence" value="ECO:0007669"/>
    <property type="project" value="TreeGrafter"/>
</dbReference>
<dbReference type="GO" id="GO:0031491">
    <property type="term" value="F:nucleosome binding"/>
    <property type="evidence" value="ECO:0007669"/>
    <property type="project" value="TreeGrafter"/>
</dbReference>
<dbReference type="GO" id="GO:0006281">
    <property type="term" value="P:DNA repair"/>
    <property type="evidence" value="ECO:0007669"/>
    <property type="project" value="UniProtKB-KW"/>
</dbReference>
<dbReference type="GO" id="GO:0006260">
    <property type="term" value="P:DNA replication"/>
    <property type="evidence" value="ECO:0007669"/>
    <property type="project" value="UniProtKB-KW"/>
</dbReference>
<dbReference type="CDD" id="cd13230">
    <property type="entry name" value="PH1_SSRP1-like"/>
    <property type="match status" value="1"/>
</dbReference>
<dbReference type="CDD" id="cd13231">
    <property type="entry name" value="PH2_SSRP1-like"/>
    <property type="match status" value="1"/>
</dbReference>
<dbReference type="CDD" id="cd13229">
    <property type="entry name" value="PH_TFIIH"/>
    <property type="match status" value="1"/>
</dbReference>
<dbReference type="FunFam" id="2.30.29.220:FF:000003">
    <property type="entry name" value="FACT complex subunit POB3"/>
    <property type="match status" value="1"/>
</dbReference>
<dbReference type="FunFam" id="2.30.29.30:FF:000146">
    <property type="entry name" value="FACT complex subunit POB3"/>
    <property type="match status" value="1"/>
</dbReference>
<dbReference type="FunFam" id="2.30.29.30:FF:000310">
    <property type="entry name" value="FACT complex subunit POB3"/>
    <property type="match status" value="1"/>
</dbReference>
<dbReference type="FunFam" id="2.30.29.150:FF:000001">
    <property type="entry name" value="Fact complex subunit ssrp1"/>
    <property type="match status" value="1"/>
</dbReference>
<dbReference type="Gene3D" id="2.30.29.150">
    <property type="match status" value="1"/>
</dbReference>
<dbReference type="Gene3D" id="2.30.29.30">
    <property type="entry name" value="Pleckstrin-homology domain (PH domain)/Phosphotyrosine-binding domain (PTB)"/>
    <property type="match status" value="2"/>
</dbReference>
<dbReference type="Gene3D" id="2.30.29.220">
    <property type="entry name" value="Structure-specific recognition protein (SSRP1)"/>
    <property type="match status" value="1"/>
</dbReference>
<dbReference type="InterPro" id="IPR011993">
    <property type="entry name" value="PH-like_dom_sf"/>
</dbReference>
<dbReference type="InterPro" id="IPR013719">
    <property type="entry name" value="RTT106/SPT16-like_middle_dom"/>
</dbReference>
<dbReference type="InterPro" id="IPR050454">
    <property type="entry name" value="RTT106/SSRP1_HistChap/FACT"/>
</dbReference>
<dbReference type="InterPro" id="IPR048993">
    <property type="entry name" value="SSRP1-like_PH1"/>
</dbReference>
<dbReference type="InterPro" id="IPR000969">
    <property type="entry name" value="SSRP1/POB3"/>
</dbReference>
<dbReference type="InterPro" id="IPR035417">
    <property type="entry name" value="SSRP1/POB3_N"/>
</dbReference>
<dbReference type="InterPro" id="IPR024954">
    <property type="entry name" value="SSRP1_DD"/>
</dbReference>
<dbReference type="InterPro" id="IPR038167">
    <property type="entry name" value="SSRP1_sf"/>
</dbReference>
<dbReference type="PANTHER" id="PTHR45849">
    <property type="entry name" value="FACT COMPLEX SUBUNIT SSRP1"/>
    <property type="match status" value="1"/>
</dbReference>
<dbReference type="PANTHER" id="PTHR45849:SF1">
    <property type="entry name" value="FACT COMPLEX SUBUNIT SSRP1"/>
    <property type="match status" value="1"/>
</dbReference>
<dbReference type="Pfam" id="PF21103">
    <property type="entry name" value="PH1_SSRP1-like"/>
    <property type="match status" value="1"/>
</dbReference>
<dbReference type="Pfam" id="PF17292">
    <property type="entry name" value="POB3_N"/>
    <property type="match status" value="1"/>
</dbReference>
<dbReference type="Pfam" id="PF08512">
    <property type="entry name" value="Rttp106-like_middle"/>
    <property type="match status" value="1"/>
</dbReference>
<dbReference type="Pfam" id="PF03531">
    <property type="entry name" value="SSrecog"/>
    <property type="match status" value="1"/>
</dbReference>
<dbReference type="PRINTS" id="PR00887">
    <property type="entry name" value="SSRCOGNITION"/>
</dbReference>
<dbReference type="SMART" id="SM01287">
    <property type="entry name" value="Rtt106"/>
    <property type="match status" value="1"/>
</dbReference>
<dbReference type="SUPFAM" id="SSF50729">
    <property type="entry name" value="PH domain-like"/>
    <property type="match status" value="1"/>
</dbReference>
<comment type="function">
    <text evidence="1">Component of the FACT complex, a general chromatin factor that acts to reorganize nucleosomes. The FACT complex is involved in multiple processes that require DNA as a template such as mRNA elongation, DNA replication and DNA repair. During transcription elongation the FACT complex acts as a histone chaperone that both destabilizes and restores nucleosomal structure. It facilitates the passage of RNA polymerase II and transcription by promoting the dissociation of one histone H2A-H2B dimer from the nucleosome, then subsequently promotes the reestablishment of the nucleosome following the passage of RNA polymerase II (By similarity).</text>
</comment>
<comment type="subunit">
    <text evidence="1">Forms a stable heterodimer with SPT16. The SPT16-POB3 dimer weakly associates with multiple molecules of NHP6 to form the FACT complex (By similarity).</text>
</comment>
<comment type="subcellular location">
    <subcellularLocation>
        <location evidence="2">Nucleus</location>
    </subcellularLocation>
    <subcellularLocation>
        <location evidence="2">Chromosome</location>
    </subcellularLocation>
    <text evidence="2">Colocalizes with RNA polymerase II on chromatin. Recruited to actively transcribed loci.</text>
</comment>
<comment type="miscellaneous">
    <text>In contrast to the orthologous protein in animals and plants, this protein does not contain a HMG box DNA-binding domain. This function may instead be provided by the HMG box of the associated NHP6 protein in the FACT complex of fungi.</text>
</comment>
<comment type="similarity">
    <text evidence="4">Belongs to the SSRP1 family.</text>
</comment>
<feature type="chain" id="PRO_0000245207" description="FACT complex subunit POB3">
    <location>
        <begin position="1"/>
        <end position="569"/>
    </location>
</feature>
<feature type="region of interest" description="Disordered" evidence="3">
    <location>
        <begin position="482"/>
        <end position="569"/>
    </location>
</feature>
<feature type="compositionally biased region" description="Basic and acidic residues" evidence="3">
    <location>
        <begin position="491"/>
        <end position="500"/>
    </location>
</feature>
<feature type="compositionally biased region" description="Acidic residues" evidence="3">
    <location>
        <begin position="537"/>
        <end position="559"/>
    </location>
</feature>
<reference key="1">
    <citation type="journal article" date="2007" name="Science">
        <title>The Fusarium graminearum genome reveals a link between localized polymorphism and pathogen specialization.</title>
        <authorList>
            <person name="Cuomo C.A."/>
            <person name="Gueldener U."/>
            <person name="Xu J.-R."/>
            <person name="Trail F."/>
            <person name="Turgeon B.G."/>
            <person name="Di Pietro A."/>
            <person name="Walton J.D."/>
            <person name="Ma L.-J."/>
            <person name="Baker S.E."/>
            <person name="Rep M."/>
            <person name="Adam G."/>
            <person name="Antoniw J."/>
            <person name="Baldwin T."/>
            <person name="Calvo S.E."/>
            <person name="Chang Y.-L."/>
            <person name="DeCaprio D."/>
            <person name="Gale L.R."/>
            <person name="Gnerre S."/>
            <person name="Goswami R.S."/>
            <person name="Hammond-Kosack K."/>
            <person name="Harris L.J."/>
            <person name="Hilburn K."/>
            <person name="Kennell J.C."/>
            <person name="Kroken S."/>
            <person name="Magnuson J.K."/>
            <person name="Mannhaupt G."/>
            <person name="Mauceli E.W."/>
            <person name="Mewes H.-W."/>
            <person name="Mitterbauer R."/>
            <person name="Muehlbauer G."/>
            <person name="Muensterkoetter M."/>
            <person name="Nelson D."/>
            <person name="O'Donnell K."/>
            <person name="Ouellet T."/>
            <person name="Qi W."/>
            <person name="Quesneville H."/>
            <person name="Roncero M.I.G."/>
            <person name="Seong K.-Y."/>
            <person name="Tetko I.V."/>
            <person name="Urban M."/>
            <person name="Waalwijk C."/>
            <person name="Ward T.J."/>
            <person name="Yao J."/>
            <person name="Birren B.W."/>
            <person name="Kistler H.C."/>
        </authorList>
    </citation>
    <scope>NUCLEOTIDE SEQUENCE [LARGE SCALE GENOMIC DNA]</scope>
    <source>
        <strain>ATCC MYA-4620 / CBS 123657 / FGSC 9075 / NRRL 31084 / PH-1</strain>
    </source>
</reference>
<reference key="2">
    <citation type="journal article" date="2010" name="Nature">
        <title>Comparative genomics reveals mobile pathogenicity chromosomes in Fusarium.</title>
        <authorList>
            <person name="Ma L.-J."/>
            <person name="van der Does H.C."/>
            <person name="Borkovich K.A."/>
            <person name="Coleman J.J."/>
            <person name="Daboussi M.-J."/>
            <person name="Di Pietro A."/>
            <person name="Dufresne M."/>
            <person name="Freitag M."/>
            <person name="Grabherr M."/>
            <person name="Henrissat B."/>
            <person name="Houterman P.M."/>
            <person name="Kang S."/>
            <person name="Shim W.-B."/>
            <person name="Woloshuk C."/>
            <person name="Xie X."/>
            <person name="Xu J.-R."/>
            <person name="Antoniw J."/>
            <person name="Baker S.E."/>
            <person name="Bluhm B.H."/>
            <person name="Breakspear A."/>
            <person name="Brown D.W."/>
            <person name="Butchko R.A.E."/>
            <person name="Chapman S."/>
            <person name="Coulson R."/>
            <person name="Coutinho P.M."/>
            <person name="Danchin E.G.J."/>
            <person name="Diener A."/>
            <person name="Gale L.R."/>
            <person name="Gardiner D.M."/>
            <person name="Goff S."/>
            <person name="Hammond-Kosack K.E."/>
            <person name="Hilburn K."/>
            <person name="Hua-Van A."/>
            <person name="Jonkers W."/>
            <person name="Kazan K."/>
            <person name="Kodira C.D."/>
            <person name="Koehrsen M."/>
            <person name="Kumar L."/>
            <person name="Lee Y.-H."/>
            <person name="Li L."/>
            <person name="Manners J.M."/>
            <person name="Miranda-Saavedra D."/>
            <person name="Mukherjee M."/>
            <person name="Park G."/>
            <person name="Park J."/>
            <person name="Park S.-Y."/>
            <person name="Proctor R.H."/>
            <person name="Regev A."/>
            <person name="Ruiz-Roldan M.C."/>
            <person name="Sain D."/>
            <person name="Sakthikumar S."/>
            <person name="Sykes S."/>
            <person name="Schwartz D.C."/>
            <person name="Turgeon B.G."/>
            <person name="Wapinski I."/>
            <person name="Yoder O."/>
            <person name="Young S."/>
            <person name="Zeng Q."/>
            <person name="Zhou S."/>
            <person name="Galagan J."/>
            <person name="Cuomo C.A."/>
            <person name="Kistler H.C."/>
            <person name="Rep M."/>
        </authorList>
    </citation>
    <scope>GENOME REANNOTATION</scope>
    <source>
        <strain>ATCC MYA-4620 / CBS 123657 / FGSC 9075 / NRRL 31084 / PH-1</strain>
    </source>
</reference>
<reference key="3">
    <citation type="journal article" date="2015" name="BMC Genomics">
        <title>The completed genome sequence of the pathogenic ascomycete fungus Fusarium graminearum.</title>
        <authorList>
            <person name="King R."/>
            <person name="Urban M."/>
            <person name="Hammond-Kosack M.C.U."/>
            <person name="Hassani-Pak K."/>
            <person name="Hammond-Kosack K.E."/>
        </authorList>
    </citation>
    <scope>NUCLEOTIDE SEQUENCE [LARGE SCALE GENOMIC DNA]</scope>
    <source>
        <strain>ATCC MYA-4620 / CBS 123657 / FGSC 9075 / NRRL 31084 / PH-1</strain>
    </source>
</reference>